<sequence>MREETREQAAPLRSGLTTGSCATATSLAAARLLLTGQRHDAVEITLPKGKVVQMRLEFCHLKGDMAEAGTLKDAGDDPDVTHGALLFSQVRLRAEPGVRFVAGAGVGTVTRPGLVLAVGEPAINPVPRKMISDHLLQLAGDCGYHGGFEVTVNVQGGEQLALKTMNPRLGILGGLSILGTSGIVRPFSCSAYIASIHQGIDVAHTNGYTHIAACTGNASEDTMRRVYNLPEIALIEMGDFVGAVLKHLRKVPVPRLTLCGGFGKISKLAAGHMDLHSRHSSIDLPQLAGWAAAIGADTALQQAIIAANTSQQALALAHAAGIALGDEVCRHALVFARSVVPAQVQVEVFAIDRQGGIVGKAGVA</sequence>
<evidence type="ECO:0000255" key="1">
    <source>
        <dbReference type="HAMAP-Rule" id="MF_00787"/>
    </source>
</evidence>
<feature type="chain" id="PRO_1000046876" description="Cobalt-precorrin-5B C(1)-methyltransferase">
    <location>
        <begin position="1"/>
        <end position="364"/>
    </location>
</feature>
<dbReference type="EC" id="2.1.1.195" evidence="1"/>
<dbReference type="EMBL" id="CT573326">
    <property type="protein sequence ID" value="CAK17525.1"/>
    <property type="molecule type" value="Genomic_DNA"/>
</dbReference>
<dbReference type="RefSeq" id="WP_011535887.1">
    <property type="nucleotide sequence ID" value="NC_008027.1"/>
</dbReference>
<dbReference type="SMR" id="Q1I4B1"/>
<dbReference type="STRING" id="384676.PSEEN4873"/>
<dbReference type="GeneID" id="32807828"/>
<dbReference type="KEGG" id="pen:PSEEN4873"/>
<dbReference type="eggNOG" id="COG1903">
    <property type="taxonomic scope" value="Bacteria"/>
</dbReference>
<dbReference type="HOGENOM" id="CLU_041273_0_0_6"/>
<dbReference type="OrthoDB" id="6439987at2"/>
<dbReference type="UniPathway" id="UPA00148">
    <property type="reaction ID" value="UER00227"/>
</dbReference>
<dbReference type="Proteomes" id="UP000000658">
    <property type="component" value="Chromosome"/>
</dbReference>
<dbReference type="GO" id="GO:0043780">
    <property type="term" value="F:cobalt-precorrin-5B C1-methyltransferase activity"/>
    <property type="evidence" value="ECO:0007669"/>
    <property type="project" value="RHEA"/>
</dbReference>
<dbReference type="GO" id="GO:0019251">
    <property type="term" value="P:anaerobic cobalamin biosynthetic process"/>
    <property type="evidence" value="ECO:0007669"/>
    <property type="project" value="UniProtKB-UniRule"/>
</dbReference>
<dbReference type="GO" id="GO:0032259">
    <property type="term" value="P:methylation"/>
    <property type="evidence" value="ECO:0007669"/>
    <property type="project" value="UniProtKB-KW"/>
</dbReference>
<dbReference type="Gene3D" id="3.30.2110.10">
    <property type="entry name" value="CbiD-like"/>
    <property type="match status" value="1"/>
</dbReference>
<dbReference type="HAMAP" id="MF_00787">
    <property type="entry name" value="CbiD"/>
    <property type="match status" value="1"/>
</dbReference>
<dbReference type="InterPro" id="IPR002748">
    <property type="entry name" value="CbiD"/>
</dbReference>
<dbReference type="InterPro" id="IPR036074">
    <property type="entry name" value="CbiD_sf"/>
</dbReference>
<dbReference type="NCBIfam" id="TIGR00312">
    <property type="entry name" value="cbiD"/>
    <property type="match status" value="1"/>
</dbReference>
<dbReference type="NCBIfam" id="NF000849">
    <property type="entry name" value="PRK00075.1-1"/>
    <property type="match status" value="1"/>
</dbReference>
<dbReference type="PANTHER" id="PTHR35863">
    <property type="entry name" value="COBALT-PRECORRIN-5B C(1)-METHYLTRANSFERASE"/>
    <property type="match status" value="1"/>
</dbReference>
<dbReference type="PANTHER" id="PTHR35863:SF1">
    <property type="entry name" value="COBALT-PRECORRIN-5B C(1)-METHYLTRANSFERASE"/>
    <property type="match status" value="1"/>
</dbReference>
<dbReference type="Pfam" id="PF01888">
    <property type="entry name" value="CbiD"/>
    <property type="match status" value="1"/>
</dbReference>
<dbReference type="PIRSF" id="PIRSF026782">
    <property type="entry name" value="CbiD"/>
    <property type="match status" value="1"/>
</dbReference>
<dbReference type="SUPFAM" id="SSF111342">
    <property type="entry name" value="CbiD-like"/>
    <property type="match status" value="1"/>
</dbReference>
<gene>
    <name evidence="1" type="primary">cbiD</name>
    <name type="ordered locus">PSEEN4873</name>
</gene>
<name>CBID_PSEE4</name>
<keyword id="KW-0169">Cobalamin biosynthesis</keyword>
<keyword id="KW-0489">Methyltransferase</keyword>
<keyword id="KW-0949">S-adenosyl-L-methionine</keyword>
<keyword id="KW-0808">Transferase</keyword>
<organism>
    <name type="scientific">Pseudomonas entomophila (strain L48)</name>
    <dbReference type="NCBI Taxonomy" id="384676"/>
    <lineage>
        <taxon>Bacteria</taxon>
        <taxon>Pseudomonadati</taxon>
        <taxon>Pseudomonadota</taxon>
        <taxon>Gammaproteobacteria</taxon>
        <taxon>Pseudomonadales</taxon>
        <taxon>Pseudomonadaceae</taxon>
        <taxon>Pseudomonas</taxon>
    </lineage>
</organism>
<proteinExistence type="inferred from homology"/>
<reference key="1">
    <citation type="journal article" date="2006" name="Nat. Biotechnol.">
        <title>Complete genome sequence of the entomopathogenic and metabolically versatile soil bacterium Pseudomonas entomophila.</title>
        <authorList>
            <person name="Vodovar N."/>
            <person name="Vallenet D."/>
            <person name="Cruveiller S."/>
            <person name="Rouy Z."/>
            <person name="Barbe V."/>
            <person name="Acosta C."/>
            <person name="Cattolico L."/>
            <person name="Jubin C."/>
            <person name="Lajus A."/>
            <person name="Segurens B."/>
            <person name="Vacherie B."/>
            <person name="Wincker P."/>
            <person name="Weissenbach J."/>
            <person name="Lemaitre B."/>
            <person name="Medigue C."/>
            <person name="Boccard F."/>
        </authorList>
    </citation>
    <scope>NUCLEOTIDE SEQUENCE [LARGE SCALE GENOMIC DNA]</scope>
    <source>
        <strain>L48</strain>
    </source>
</reference>
<protein>
    <recommendedName>
        <fullName evidence="1">Cobalt-precorrin-5B C(1)-methyltransferase</fullName>
        <ecNumber evidence="1">2.1.1.195</ecNumber>
    </recommendedName>
    <alternativeName>
        <fullName evidence="1">Cobalt-precorrin-6A synthase</fullName>
    </alternativeName>
</protein>
<comment type="function">
    <text evidence="1">Catalyzes the methylation of C-1 in cobalt-precorrin-5B to form cobalt-precorrin-6A.</text>
</comment>
<comment type="catalytic activity">
    <reaction evidence="1">
        <text>Co-precorrin-5B + S-adenosyl-L-methionine = Co-precorrin-6A + S-adenosyl-L-homocysteine</text>
        <dbReference type="Rhea" id="RHEA:26285"/>
        <dbReference type="ChEBI" id="CHEBI:57856"/>
        <dbReference type="ChEBI" id="CHEBI:59789"/>
        <dbReference type="ChEBI" id="CHEBI:60063"/>
        <dbReference type="ChEBI" id="CHEBI:60064"/>
        <dbReference type="EC" id="2.1.1.195"/>
    </reaction>
</comment>
<comment type="pathway">
    <text evidence="1">Cofactor biosynthesis; adenosylcobalamin biosynthesis; cob(II)yrinate a,c-diamide from sirohydrochlorin (anaerobic route): step 6/10.</text>
</comment>
<comment type="similarity">
    <text evidence="1">Belongs to the CbiD family.</text>
</comment>
<accession>Q1I4B1</accession>